<reference key="1">
    <citation type="submission" date="2007-05" db="EMBL/GenBank/DDBJ databases">
        <title>Complete sequence of Pseudomonas putida F1.</title>
        <authorList>
            <consortium name="US DOE Joint Genome Institute"/>
            <person name="Copeland A."/>
            <person name="Lucas S."/>
            <person name="Lapidus A."/>
            <person name="Barry K."/>
            <person name="Detter J.C."/>
            <person name="Glavina del Rio T."/>
            <person name="Hammon N."/>
            <person name="Israni S."/>
            <person name="Dalin E."/>
            <person name="Tice H."/>
            <person name="Pitluck S."/>
            <person name="Chain P."/>
            <person name="Malfatti S."/>
            <person name="Shin M."/>
            <person name="Vergez L."/>
            <person name="Schmutz J."/>
            <person name="Larimer F."/>
            <person name="Land M."/>
            <person name="Hauser L."/>
            <person name="Kyrpides N."/>
            <person name="Lykidis A."/>
            <person name="Parales R."/>
            <person name="Richardson P."/>
        </authorList>
    </citation>
    <scope>NUCLEOTIDE SEQUENCE [LARGE SCALE GENOMIC DNA]</scope>
    <source>
        <strain>ATCC 700007 / DSM 6899 / JCM 31910 / BCRC 17059 / LMG 24140 / F1</strain>
    </source>
</reference>
<proteinExistence type="inferred from homology"/>
<comment type="function">
    <text evidence="1">Allows the formation of correctly charged Asn-tRNA(Asn) or Gln-tRNA(Gln) through the transamidation of misacylated Asp-tRNA(Asn) or Glu-tRNA(Gln) in organisms which lack either or both of asparaginyl-tRNA or glutaminyl-tRNA synthetases. The reaction takes place in the presence of glutamine and ATP through an activated phospho-Asp-tRNA(Asn) or phospho-Glu-tRNA(Gln).</text>
</comment>
<comment type="catalytic activity">
    <reaction evidence="1">
        <text>L-glutamyl-tRNA(Gln) + L-glutamine + ATP + H2O = L-glutaminyl-tRNA(Gln) + L-glutamate + ADP + phosphate + H(+)</text>
        <dbReference type="Rhea" id="RHEA:17521"/>
        <dbReference type="Rhea" id="RHEA-COMP:9681"/>
        <dbReference type="Rhea" id="RHEA-COMP:9684"/>
        <dbReference type="ChEBI" id="CHEBI:15377"/>
        <dbReference type="ChEBI" id="CHEBI:15378"/>
        <dbReference type="ChEBI" id="CHEBI:29985"/>
        <dbReference type="ChEBI" id="CHEBI:30616"/>
        <dbReference type="ChEBI" id="CHEBI:43474"/>
        <dbReference type="ChEBI" id="CHEBI:58359"/>
        <dbReference type="ChEBI" id="CHEBI:78520"/>
        <dbReference type="ChEBI" id="CHEBI:78521"/>
        <dbReference type="ChEBI" id="CHEBI:456216"/>
    </reaction>
</comment>
<comment type="catalytic activity">
    <reaction evidence="1">
        <text>L-aspartyl-tRNA(Asn) + L-glutamine + ATP + H2O = L-asparaginyl-tRNA(Asn) + L-glutamate + ADP + phosphate + 2 H(+)</text>
        <dbReference type="Rhea" id="RHEA:14513"/>
        <dbReference type="Rhea" id="RHEA-COMP:9674"/>
        <dbReference type="Rhea" id="RHEA-COMP:9677"/>
        <dbReference type="ChEBI" id="CHEBI:15377"/>
        <dbReference type="ChEBI" id="CHEBI:15378"/>
        <dbReference type="ChEBI" id="CHEBI:29985"/>
        <dbReference type="ChEBI" id="CHEBI:30616"/>
        <dbReference type="ChEBI" id="CHEBI:43474"/>
        <dbReference type="ChEBI" id="CHEBI:58359"/>
        <dbReference type="ChEBI" id="CHEBI:78515"/>
        <dbReference type="ChEBI" id="CHEBI:78516"/>
        <dbReference type="ChEBI" id="CHEBI:456216"/>
    </reaction>
</comment>
<comment type="subunit">
    <text evidence="1">Heterotrimer of A, B and C subunits.</text>
</comment>
<comment type="similarity">
    <text evidence="1">Belongs to the GatB/GatE family. GatB subfamily.</text>
</comment>
<dbReference type="EC" id="6.3.5.-" evidence="1"/>
<dbReference type="EMBL" id="CP000712">
    <property type="protein sequence ID" value="ABQ77131.1"/>
    <property type="molecule type" value="Genomic_DNA"/>
</dbReference>
<dbReference type="SMR" id="A5VZ21"/>
<dbReference type="KEGG" id="ppf:Pput_0970"/>
<dbReference type="eggNOG" id="COG0064">
    <property type="taxonomic scope" value="Bacteria"/>
</dbReference>
<dbReference type="HOGENOM" id="CLU_019240_0_0_6"/>
<dbReference type="GO" id="GO:0050566">
    <property type="term" value="F:asparaginyl-tRNA synthase (glutamine-hydrolyzing) activity"/>
    <property type="evidence" value="ECO:0007669"/>
    <property type="project" value="RHEA"/>
</dbReference>
<dbReference type="GO" id="GO:0005524">
    <property type="term" value="F:ATP binding"/>
    <property type="evidence" value="ECO:0007669"/>
    <property type="project" value="UniProtKB-KW"/>
</dbReference>
<dbReference type="GO" id="GO:0050567">
    <property type="term" value="F:glutaminyl-tRNA synthase (glutamine-hydrolyzing) activity"/>
    <property type="evidence" value="ECO:0007669"/>
    <property type="project" value="UniProtKB-UniRule"/>
</dbReference>
<dbReference type="GO" id="GO:0070681">
    <property type="term" value="P:glutaminyl-tRNAGln biosynthesis via transamidation"/>
    <property type="evidence" value="ECO:0007669"/>
    <property type="project" value="TreeGrafter"/>
</dbReference>
<dbReference type="GO" id="GO:0006412">
    <property type="term" value="P:translation"/>
    <property type="evidence" value="ECO:0007669"/>
    <property type="project" value="UniProtKB-UniRule"/>
</dbReference>
<dbReference type="FunFam" id="1.10.10.410:FF:000001">
    <property type="entry name" value="Aspartyl/glutamyl-tRNA(Asn/Gln) amidotransferase subunit B"/>
    <property type="match status" value="1"/>
</dbReference>
<dbReference type="FunFam" id="1.10.150.380:FF:000001">
    <property type="entry name" value="Aspartyl/glutamyl-tRNA(Asn/Gln) amidotransferase subunit B"/>
    <property type="match status" value="1"/>
</dbReference>
<dbReference type="Gene3D" id="1.10.10.410">
    <property type="match status" value="1"/>
</dbReference>
<dbReference type="Gene3D" id="1.10.150.380">
    <property type="entry name" value="GatB domain, N-terminal subdomain"/>
    <property type="match status" value="1"/>
</dbReference>
<dbReference type="HAMAP" id="MF_00121">
    <property type="entry name" value="GatB"/>
    <property type="match status" value="1"/>
</dbReference>
<dbReference type="InterPro" id="IPR017959">
    <property type="entry name" value="Asn/Gln-tRNA_amidoTrfase_suB/E"/>
</dbReference>
<dbReference type="InterPro" id="IPR006075">
    <property type="entry name" value="Asn/Gln-tRNA_Trfase_suB/E_cat"/>
</dbReference>
<dbReference type="InterPro" id="IPR018027">
    <property type="entry name" value="Asn/Gln_amidotransferase"/>
</dbReference>
<dbReference type="InterPro" id="IPR003789">
    <property type="entry name" value="Asn/Gln_tRNA_amidoTrase-B-like"/>
</dbReference>
<dbReference type="InterPro" id="IPR004413">
    <property type="entry name" value="GatB"/>
</dbReference>
<dbReference type="InterPro" id="IPR042114">
    <property type="entry name" value="GatB_C_1"/>
</dbReference>
<dbReference type="InterPro" id="IPR023168">
    <property type="entry name" value="GatB_Yqey_C_2"/>
</dbReference>
<dbReference type="InterPro" id="IPR017958">
    <property type="entry name" value="Gln-tRNA_amidoTrfase_suB_CS"/>
</dbReference>
<dbReference type="InterPro" id="IPR014746">
    <property type="entry name" value="Gln_synth/guanido_kin_cat_dom"/>
</dbReference>
<dbReference type="NCBIfam" id="TIGR00133">
    <property type="entry name" value="gatB"/>
    <property type="match status" value="1"/>
</dbReference>
<dbReference type="NCBIfam" id="NF004012">
    <property type="entry name" value="PRK05477.1-2"/>
    <property type="match status" value="1"/>
</dbReference>
<dbReference type="NCBIfam" id="NF004014">
    <property type="entry name" value="PRK05477.1-4"/>
    <property type="match status" value="1"/>
</dbReference>
<dbReference type="NCBIfam" id="NF004015">
    <property type="entry name" value="PRK05477.1-5"/>
    <property type="match status" value="1"/>
</dbReference>
<dbReference type="PANTHER" id="PTHR11659">
    <property type="entry name" value="GLUTAMYL-TRNA GLN AMIDOTRANSFERASE SUBUNIT B MITOCHONDRIAL AND PROKARYOTIC PET112-RELATED"/>
    <property type="match status" value="1"/>
</dbReference>
<dbReference type="PANTHER" id="PTHR11659:SF0">
    <property type="entry name" value="GLUTAMYL-TRNA(GLN) AMIDOTRANSFERASE SUBUNIT B, MITOCHONDRIAL"/>
    <property type="match status" value="1"/>
</dbReference>
<dbReference type="Pfam" id="PF02934">
    <property type="entry name" value="GatB_N"/>
    <property type="match status" value="1"/>
</dbReference>
<dbReference type="Pfam" id="PF02637">
    <property type="entry name" value="GatB_Yqey"/>
    <property type="match status" value="1"/>
</dbReference>
<dbReference type="SMART" id="SM00845">
    <property type="entry name" value="GatB_Yqey"/>
    <property type="match status" value="1"/>
</dbReference>
<dbReference type="SUPFAM" id="SSF89095">
    <property type="entry name" value="GatB/YqeY motif"/>
    <property type="match status" value="1"/>
</dbReference>
<dbReference type="SUPFAM" id="SSF55931">
    <property type="entry name" value="Glutamine synthetase/guanido kinase"/>
    <property type="match status" value="1"/>
</dbReference>
<dbReference type="PROSITE" id="PS01234">
    <property type="entry name" value="GATB"/>
    <property type="match status" value="1"/>
</dbReference>
<gene>
    <name evidence="1" type="primary">gatB</name>
    <name type="ordered locus">Pput_0970</name>
</gene>
<protein>
    <recommendedName>
        <fullName evidence="1">Aspartyl/glutamyl-tRNA(Asn/Gln) amidotransferase subunit B</fullName>
        <shortName evidence="1">Asp/Glu-ADT subunit B</shortName>
        <ecNumber evidence="1">6.3.5.-</ecNumber>
    </recommendedName>
</protein>
<accession>A5VZ21</accession>
<feature type="chain" id="PRO_1000016024" description="Aspartyl/glutamyl-tRNA(Asn/Gln) amidotransferase subunit B">
    <location>
        <begin position="1"/>
        <end position="481"/>
    </location>
</feature>
<keyword id="KW-0067">ATP-binding</keyword>
<keyword id="KW-0436">Ligase</keyword>
<keyword id="KW-0547">Nucleotide-binding</keyword>
<keyword id="KW-0648">Protein biosynthesis</keyword>
<organism>
    <name type="scientific">Pseudomonas putida (strain ATCC 700007 / DSM 6899 / JCM 31910 / BCRC 17059 / LMG 24140 / F1)</name>
    <dbReference type="NCBI Taxonomy" id="351746"/>
    <lineage>
        <taxon>Bacteria</taxon>
        <taxon>Pseudomonadati</taxon>
        <taxon>Pseudomonadota</taxon>
        <taxon>Gammaproteobacteria</taxon>
        <taxon>Pseudomonadales</taxon>
        <taxon>Pseudomonadaceae</taxon>
        <taxon>Pseudomonas</taxon>
    </lineage>
</organism>
<sequence length="481" mass="52679">MQWEVVIGLEIHTQLATQSKIFSGSATTFGSEPNTQASLVDLGMPGVLPVLNEEAVRMACMFGLAIDAEIGKRNVFARKNYFYPDLPKGYQISQMDLPIVGKGHLDIALEDGTIKRIGVTRAHLEEDAGKSLHEDFSGSTGIDLNRAGTPLLEIVSEPDMRSAKEAVAYVKAIHALVRYLGICDGNMAEGSLRCDCNVSIRPKGQTEFGTRCEIKNVNSFRFIERAINSEIQRQIDLIEDGGKVVQETRLYDPNKDETRSMRSKEEANDYRYFPDPDLLPVVIEDSFLETIRAGLPELPPQKVERFQTQYGLSAYDANVLASSREQADYFEEVVKIGGDAKLAANWVMVELGSLLNKLGVEIDQAPVSAAQLGGMLLRIRDNTISGKIAKTVFEAMAAGEGDADSIIESKGLKQVTDTGAIDKMLDEMLAANAEQVEQYRAADEAKRGKMFGFFVGQAMKASKGKANPGQVNQLLKAKLEG</sequence>
<evidence type="ECO:0000255" key="1">
    <source>
        <dbReference type="HAMAP-Rule" id="MF_00121"/>
    </source>
</evidence>
<name>GATB_PSEP1</name>